<accession>Q3A2G9</accession>
<organism>
    <name type="scientific">Syntrophotalea carbinolica (strain DSM 2380 / NBRC 103641 / GraBd1)</name>
    <name type="common">Pelobacter carbinolicus</name>
    <dbReference type="NCBI Taxonomy" id="338963"/>
    <lineage>
        <taxon>Bacteria</taxon>
        <taxon>Pseudomonadati</taxon>
        <taxon>Thermodesulfobacteriota</taxon>
        <taxon>Desulfuromonadia</taxon>
        <taxon>Desulfuromonadales</taxon>
        <taxon>Syntrophotaleaceae</taxon>
        <taxon>Syntrophotalea</taxon>
    </lineage>
</organism>
<proteinExistence type="inferred from homology"/>
<protein>
    <recommendedName>
        <fullName evidence="2">D-alanine--D-alanine ligase</fullName>
        <ecNumber evidence="2">6.3.2.4</ecNumber>
    </recommendedName>
    <alternativeName>
        <fullName evidence="2">D-Ala-D-Ala ligase</fullName>
    </alternativeName>
    <alternativeName>
        <fullName evidence="2">D-alanylalanine synthetase</fullName>
    </alternativeName>
</protein>
<evidence type="ECO:0000250" key="1"/>
<evidence type="ECO:0000255" key="2">
    <source>
        <dbReference type="HAMAP-Rule" id="MF_00047"/>
    </source>
</evidence>
<reference key="1">
    <citation type="submission" date="2005-10" db="EMBL/GenBank/DDBJ databases">
        <title>Complete sequence of Pelobacter carbinolicus DSM 2380.</title>
        <authorList>
            <person name="Copeland A."/>
            <person name="Lucas S."/>
            <person name="Lapidus A."/>
            <person name="Barry K."/>
            <person name="Detter J.C."/>
            <person name="Glavina T."/>
            <person name="Hammon N."/>
            <person name="Israni S."/>
            <person name="Pitluck S."/>
            <person name="Chertkov O."/>
            <person name="Schmutz J."/>
            <person name="Larimer F."/>
            <person name="Land M."/>
            <person name="Kyrpides N."/>
            <person name="Ivanova N."/>
            <person name="Richardson P."/>
        </authorList>
    </citation>
    <scope>NUCLEOTIDE SEQUENCE [LARGE SCALE GENOMIC DNA]</scope>
    <source>
        <strain>DSM 2380 / NBRC 103641 / GraBd1</strain>
    </source>
</reference>
<dbReference type="EC" id="6.3.2.4" evidence="2"/>
<dbReference type="EMBL" id="CP000142">
    <property type="protein sequence ID" value="ABA89438.1"/>
    <property type="molecule type" value="Genomic_DNA"/>
</dbReference>
<dbReference type="RefSeq" id="WP_011341953.1">
    <property type="nucleotide sequence ID" value="NC_007498.2"/>
</dbReference>
<dbReference type="SMR" id="Q3A2G9"/>
<dbReference type="STRING" id="338963.Pcar_2199"/>
<dbReference type="KEGG" id="pca:Pcar_2199"/>
<dbReference type="eggNOG" id="COG1181">
    <property type="taxonomic scope" value="Bacteria"/>
</dbReference>
<dbReference type="HOGENOM" id="CLU_039268_2_0_7"/>
<dbReference type="OrthoDB" id="9813261at2"/>
<dbReference type="UniPathway" id="UPA00219"/>
<dbReference type="Proteomes" id="UP000002534">
    <property type="component" value="Chromosome"/>
</dbReference>
<dbReference type="GO" id="GO:0005737">
    <property type="term" value="C:cytoplasm"/>
    <property type="evidence" value="ECO:0007669"/>
    <property type="project" value="UniProtKB-SubCell"/>
</dbReference>
<dbReference type="GO" id="GO:0005524">
    <property type="term" value="F:ATP binding"/>
    <property type="evidence" value="ECO:0007669"/>
    <property type="project" value="UniProtKB-KW"/>
</dbReference>
<dbReference type="GO" id="GO:0008716">
    <property type="term" value="F:D-alanine-D-alanine ligase activity"/>
    <property type="evidence" value="ECO:0007669"/>
    <property type="project" value="UniProtKB-UniRule"/>
</dbReference>
<dbReference type="GO" id="GO:0046872">
    <property type="term" value="F:metal ion binding"/>
    <property type="evidence" value="ECO:0007669"/>
    <property type="project" value="UniProtKB-KW"/>
</dbReference>
<dbReference type="GO" id="GO:0071555">
    <property type="term" value="P:cell wall organization"/>
    <property type="evidence" value="ECO:0007669"/>
    <property type="project" value="UniProtKB-KW"/>
</dbReference>
<dbReference type="GO" id="GO:0009252">
    <property type="term" value="P:peptidoglycan biosynthetic process"/>
    <property type="evidence" value="ECO:0007669"/>
    <property type="project" value="UniProtKB-UniRule"/>
</dbReference>
<dbReference type="GO" id="GO:0008360">
    <property type="term" value="P:regulation of cell shape"/>
    <property type="evidence" value="ECO:0007669"/>
    <property type="project" value="UniProtKB-KW"/>
</dbReference>
<dbReference type="FunFam" id="3.30.470.20:FF:000008">
    <property type="entry name" value="D-alanine--D-alanine ligase"/>
    <property type="match status" value="1"/>
</dbReference>
<dbReference type="Gene3D" id="3.40.50.20">
    <property type="match status" value="1"/>
</dbReference>
<dbReference type="Gene3D" id="3.30.1490.20">
    <property type="entry name" value="ATP-grasp fold, A domain"/>
    <property type="match status" value="1"/>
</dbReference>
<dbReference type="Gene3D" id="3.30.470.20">
    <property type="entry name" value="ATP-grasp fold, B domain"/>
    <property type="match status" value="1"/>
</dbReference>
<dbReference type="HAMAP" id="MF_00047">
    <property type="entry name" value="Dala_Dala_lig"/>
    <property type="match status" value="1"/>
</dbReference>
<dbReference type="InterPro" id="IPR011761">
    <property type="entry name" value="ATP-grasp"/>
</dbReference>
<dbReference type="InterPro" id="IPR013815">
    <property type="entry name" value="ATP_grasp_subdomain_1"/>
</dbReference>
<dbReference type="InterPro" id="IPR000291">
    <property type="entry name" value="D-Ala_lig_Van_CS"/>
</dbReference>
<dbReference type="InterPro" id="IPR005905">
    <property type="entry name" value="D_ala_D_ala"/>
</dbReference>
<dbReference type="InterPro" id="IPR011095">
    <property type="entry name" value="Dala_Dala_lig_C"/>
</dbReference>
<dbReference type="InterPro" id="IPR011127">
    <property type="entry name" value="Dala_Dala_lig_N"/>
</dbReference>
<dbReference type="InterPro" id="IPR016185">
    <property type="entry name" value="PreATP-grasp_dom_sf"/>
</dbReference>
<dbReference type="NCBIfam" id="TIGR01205">
    <property type="entry name" value="D_ala_D_alaTIGR"/>
    <property type="match status" value="1"/>
</dbReference>
<dbReference type="NCBIfam" id="NF002378">
    <property type="entry name" value="PRK01372.1"/>
    <property type="match status" value="1"/>
</dbReference>
<dbReference type="PANTHER" id="PTHR23132">
    <property type="entry name" value="D-ALANINE--D-ALANINE LIGASE"/>
    <property type="match status" value="1"/>
</dbReference>
<dbReference type="PANTHER" id="PTHR23132:SF23">
    <property type="entry name" value="D-ALANINE--D-ALANINE LIGASE B"/>
    <property type="match status" value="1"/>
</dbReference>
<dbReference type="Pfam" id="PF07478">
    <property type="entry name" value="Dala_Dala_lig_C"/>
    <property type="match status" value="1"/>
</dbReference>
<dbReference type="Pfam" id="PF01820">
    <property type="entry name" value="Dala_Dala_lig_N"/>
    <property type="match status" value="1"/>
</dbReference>
<dbReference type="PIRSF" id="PIRSF039102">
    <property type="entry name" value="Ddl/VanB"/>
    <property type="match status" value="1"/>
</dbReference>
<dbReference type="SUPFAM" id="SSF56059">
    <property type="entry name" value="Glutathione synthetase ATP-binding domain-like"/>
    <property type="match status" value="1"/>
</dbReference>
<dbReference type="SUPFAM" id="SSF52440">
    <property type="entry name" value="PreATP-grasp domain"/>
    <property type="match status" value="1"/>
</dbReference>
<dbReference type="PROSITE" id="PS50975">
    <property type="entry name" value="ATP_GRASP"/>
    <property type="match status" value="1"/>
</dbReference>
<dbReference type="PROSITE" id="PS00843">
    <property type="entry name" value="DALA_DALA_LIGASE_1"/>
    <property type="match status" value="1"/>
</dbReference>
<dbReference type="PROSITE" id="PS00844">
    <property type="entry name" value="DALA_DALA_LIGASE_2"/>
    <property type="match status" value="1"/>
</dbReference>
<gene>
    <name evidence="2" type="primary">ddl</name>
    <name type="ordered locus">Pcar_2199</name>
</gene>
<name>DDL_SYNC1</name>
<sequence length="305" mass="32716">MQRQELQQKKIAVLMGGLSAEREVSLRTGKAISQALTRCGYEVTDIDAGRDLAQQLEKTGVEVAFIALHGRFGEDGTVQGLLELADIPYTGSGVLASSLAMDKVATKKMLCYHGIATPGFAVMRRGQKICGTLPDYPLVVKPAREGSTIGISIVHDEQELAAGLEEAFRHDDLVLVEQFIAGAEVTVGVLDGQPLPIIQVVPKGGFYDYQSKYTPGQTEYLLPAPLPETLYGALQDSAVRVFEAIGCCGAARVDFMVTDTGFYCLEVNTIPGMTETSLLPKAANAVGMSFDELVERILAGASLRK</sequence>
<keyword id="KW-0067">ATP-binding</keyword>
<keyword id="KW-0133">Cell shape</keyword>
<keyword id="KW-0961">Cell wall biogenesis/degradation</keyword>
<keyword id="KW-0963">Cytoplasm</keyword>
<keyword id="KW-0436">Ligase</keyword>
<keyword id="KW-0460">Magnesium</keyword>
<keyword id="KW-0464">Manganese</keyword>
<keyword id="KW-0479">Metal-binding</keyword>
<keyword id="KW-0547">Nucleotide-binding</keyword>
<keyword id="KW-0573">Peptidoglycan synthesis</keyword>
<keyword id="KW-1185">Reference proteome</keyword>
<feature type="chain" id="PRO_0000341146" description="D-alanine--D-alanine ligase">
    <location>
        <begin position="1"/>
        <end position="305"/>
    </location>
</feature>
<feature type="domain" description="ATP-grasp" evidence="2">
    <location>
        <begin position="107"/>
        <end position="299"/>
    </location>
</feature>
<feature type="binding site" evidence="2">
    <location>
        <begin position="134"/>
        <end position="186"/>
    </location>
    <ligand>
        <name>ATP</name>
        <dbReference type="ChEBI" id="CHEBI:30616"/>
    </ligand>
</feature>
<feature type="binding site" evidence="2">
    <location>
        <position position="254"/>
    </location>
    <ligand>
        <name>Mg(2+)</name>
        <dbReference type="ChEBI" id="CHEBI:18420"/>
        <label>1</label>
    </ligand>
</feature>
<feature type="binding site" evidence="2">
    <location>
        <position position="266"/>
    </location>
    <ligand>
        <name>Mg(2+)</name>
        <dbReference type="ChEBI" id="CHEBI:18420"/>
        <label>1</label>
    </ligand>
</feature>
<feature type="binding site" evidence="2">
    <location>
        <position position="266"/>
    </location>
    <ligand>
        <name>Mg(2+)</name>
        <dbReference type="ChEBI" id="CHEBI:18420"/>
        <label>2</label>
    </ligand>
</feature>
<feature type="binding site" evidence="2">
    <location>
        <position position="268"/>
    </location>
    <ligand>
        <name>Mg(2+)</name>
        <dbReference type="ChEBI" id="CHEBI:18420"/>
        <label>2</label>
    </ligand>
</feature>
<comment type="function">
    <text evidence="2">Cell wall formation.</text>
</comment>
<comment type="catalytic activity">
    <reaction evidence="2">
        <text>2 D-alanine + ATP = D-alanyl-D-alanine + ADP + phosphate + H(+)</text>
        <dbReference type="Rhea" id="RHEA:11224"/>
        <dbReference type="ChEBI" id="CHEBI:15378"/>
        <dbReference type="ChEBI" id="CHEBI:30616"/>
        <dbReference type="ChEBI" id="CHEBI:43474"/>
        <dbReference type="ChEBI" id="CHEBI:57416"/>
        <dbReference type="ChEBI" id="CHEBI:57822"/>
        <dbReference type="ChEBI" id="CHEBI:456216"/>
        <dbReference type="EC" id="6.3.2.4"/>
    </reaction>
</comment>
<comment type="cofactor">
    <cofactor evidence="1">
        <name>Mg(2+)</name>
        <dbReference type="ChEBI" id="CHEBI:18420"/>
    </cofactor>
    <cofactor evidence="1">
        <name>Mn(2+)</name>
        <dbReference type="ChEBI" id="CHEBI:29035"/>
    </cofactor>
    <text evidence="1">Binds 2 magnesium or manganese ions per subunit.</text>
</comment>
<comment type="pathway">
    <text evidence="2">Cell wall biogenesis; peptidoglycan biosynthesis.</text>
</comment>
<comment type="subcellular location">
    <subcellularLocation>
        <location evidence="2">Cytoplasm</location>
    </subcellularLocation>
</comment>
<comment type="similarity">
    <text evidence="2">Belongs to the D-alanine--D-alanine ligase family.</text>
</comment>